<feature type="chain" id="PRO_0000192516" description="Putative cysteine protease YopT-like blr2140">
    <location>
        <begin position="1"/>
        <end position="271"/>
    </location>
</feature>
<feature type="region of interest" description="Disordered" evidence="2">
    <location>
        <begin position="1"/>
        <end position="81"/>
    </location>
</feature>
<feature type="region of interest" description="Disordered" evidence="2">
    <location>
        <begin position="114"/>
        <end position="136"/>
    </location>
</feature>
<feature type="compositionally biased region" description="Polar residues" evidence="2">
    <location>
        <begin position="7"/>
        <end position="29"/>
    </location>
</feature>
<feature type="compositionally biased region" description="Low complexity" evidence="2">
    <location>
        <begin position="65"/>
        <end position="81"/>
    </location>
</feature>
<feature type="active site" evidence="1">
    <location>
        <position position="100"/>
    </location>
</feature>
<feature type="active site" evidence="1">
    <location>
        <position position="213"/>
    </location>
</feature>
<feature type="active site" evidence="1">
    <location>
        <position position="228"/>
    </location>
</feature>
<organism>
    <name type="scientific">Bradyrhizobium diazoefficiens (strain JCM 10833 / BCRC 13528 / IAM 13628 / NBRC 14792 / USDA 110)</name>
    <dbReference type="NCBI Taxonomy" id="224911"/>
    <lineage>
        <taxon>Bacteria</taxon>
        <taxon>Pseudomonadati</taxon>
        <taxon>Pseudomonadota</taxon>
        <taxon>Alphaproteobacteria</taxon>
        <taxon>Hyphomicrobiales</taxon>
        <taxon>Nitrobacteraceae</taxon>
        <taxon>Bradyrhizobium</taxon>
    </lineage>
</organism>
<comment type="function">
    <text evidence="1">Potential cysteine protease, which may play a central role after invasion of host cell.</text>
</comment>
<comment type="similarity">
    <text evidence="3">Belongs to the peptidase C58 family.</text>
</comment>
<sequence length="271" mass="29195">MYDRIGGSSTRTSQTDEPSQSVDSGSFTETLADLAPQWSSRSGELPDKMGACCSKPDTLDANVQTSSASEPSTSSPESPATSLFEYRTADLRDANVDGICVGLTAEWFRNLSNSPSTRMSALTPGSQTHASAAERQQQYQRLKDQLRSRGAGSSQADLQAQNTILEEAGLEPAGEEKRFAFGKSSNVKSMVNEINEDGSNHLLSLYFAEGGAHTVATSASNGTTTLFDPNYGEFTVRSDPDQMASLLQSLANRYRNPNGQHLSTITTQRMQ</sequence>
<accession>Q89T99</accession>
<dbReference type="EC" id="3.4.22.-"/>
<dbReference type="EMBL" id="BA000040">
    <property type="protein sequence ID" value="BAC47405.1"/>
    <property type="molecule type" value="Genomic_DNA"/>
</dbReference>
<dbReference type="RefSeq" id="NP_768780.1">
    <property type="nucleotide sequence ID" value="NC_004463.1"/>
</dbReference>
<dbReference type="RefSeq" id="WP_011084934.1">
    <property type="nucleotide sequence ID" value="NZ_CP011360.1"/>
</dbReference>
<dbReference type="SMR" id="Q89T99"/>
<dbReference type="STRING" id="224911.AAV28_07540"/>
<dbReference type="MEROPS" id="C58.004"/>
<dbReference type="EnsemblBacteria" id="BAC47405">
    <property type="protein sequence ID" value="BAC47405"/>
    <property type="gene ID" value="BAC47405"/>
</dbReference>
<dbReference type="KEGG" id="bja:blr2140"/>
<dbReference type="PATRIC" id="fig|224911.44.peg.1656"/>
<dbReference type="eggNOG" id="ENOG50334JQ">
    <property type="taxonomic scope" value="Bacteria"/>
</dbReference>
<dbReference type="HOGENOM" id="CLU_089565_0_0_5"/>
<dbReference type="InParanoid" id="Q89T99"/>
<dbReference type="OrthoDB" id="7300477at2"/>
<dbReference type="Proteomes" id="UP000002526">
    <property type="component" value="Chromosome"/>
</dbReference>
<dbReference type="GO" id="GO:0004197">
    <property type="term" value="F:cysteine-type endopeptidase activity"/>
    <property type="evidence" value="ECO:0007669"/>
    <property type="project" value="InterPro"/>
</dbReference>
<dbReference type="GO" id="GO:0006508">
    <property type="term" value="P:proteolysis"/>
    <property type="evidence" value="ECO:0007669"/>
    <property type="project" value="UniProtKB-KW"/>
</dbReference>
<dbReference type="CDD" id="cd20497">
    <property type="entry name" value="C58_YopT-like"/>
    <property type="match status" value="1"/>
</dbReference>
<dbReference type="Gene3D" id="3.90.70.20">
    <property type="match status" value="1"/>
</dbReference>
<dbReference type="InterPro" id="IPR038765">
    <property type="entry name" value="Papain-like_cys_pep_sf"/>
</dbReference>
<dbReference type="InterPro" id="IPR006473">
    <property type="entry name" value="Peptidase_C58_Yopt"/>
</dbReference>
<dbReference type="NCBIfam" id="TIGR01586">
    <property type="entry name" value="yopT_cys_prot"/>
    <property type="match status" value="1"/>
</dbReference>
<dbReference type="Pfam" id="PF03543">
    <property type="entry name" value="Peptidase_C58"/>
    <property type="match status" value="1"/>
</dbReference>
<dbReference type="SUPFAM" id="SSF54001">
    <property type="entry name" value="Cysteine proteinases"/>
    <property type="match status" value="1"/>
</dbReference>
<proteinExistence type="inferred from homology"/>
<reference key="1">
    <citation type="journal article" date="2002" name="DNA Res.">
        <title>Complete genomic sequence of nitrogen-fixing symbiotic bacterium Bradyrhizobium japonicum USDA110.</title>
        <authorList>
            <person name="Kaneko T."/>
            <person name="Nakamura Y."/>
            <person name="Sato S."/>
            <person name="Minamisawa K."/>
            <person name="Uchiumi T."/>
            <person name="Sasamoto S."/>
            <person name="Watanabe A."/>
            <person name="Idesawa K."/>
            <person name="Iriguchi M."/>
            <person name="Kawashima K."/>
            <person name="Kohara M."/>
            <person name="Matsumoto M."/>
            <person name="Shimpo S."/>
            <person name="Tsuruoka H."/>
            <person name="Wada T."/>
            <person name="Yamada M."/>
            <person name="Tabata S."/>
        </authorList>
    </citation>
    <scope>NUCLEOTIDE SEQUENCE [LARGE SCALE GENOMIC DNA]</scope>
    <source>
        <strain>JCM 10833 / BCRC 13528 / IAM 13628 / NBRC 14792 / USDA 110</strain>
    </source>
</reference>
<protein>
    <recommendedName>
        <fullName>Putative cysteine protease YopT-like blr2140</fullName>
        <ecNumber>3.4.22.-</ecNumber>
    </recommendedName>
</protein>
<keyword id="KW-0378">Hydrolase</keyword>
<keyword id="KW-0645">Protease</keyword>
<keyword id="KW-1185">Reference proteome</keyword>
<keyword id="KW-0788">Thiol protease</keyword>
<evidence type="ECO:0000250" key="1"/>
<evidence type="ECO:0000256" key="2">
    <source>
        <dbReference type="SAM" id="MobiDB-lite"/>
    </source>
</evidence>
<evidence type="ECO:0000305" key="3"/>
<name>Y2140_BRADU</name>
<gene>
    <name type="ordered locus">blr2140</name>
</gene>